<name>MUTS_BRUME</name>
<proteinExistence type="inferred from homology"/>
<accession>Q8YES6</accession>
<evidence type="ECO:0000255" key="1">
    <source>
        <dbReference type="HAMAP-Rule" id="MF_00096"/>
    </source>
</evidence>
<evidence type="ECO:0000256" key="2">
    <source>
        <dbReference type="SAM" id="MobiDB-lite"/>
    </source>
</evidence>
<evidence type="ECO:0000305" key="3"/>
<gene>
    <name evidence="1" type="primary">mutS</name>
    <name type="ordered locus">BMEI1801</name>
</gene>
<feature type="chain" id="PRO_0000115077" description="DNA mismatch repair protein MutS">
    <location>
        <begin position="1"/>
        <end position="910"/>
    </location>
</feature>
<feature type="region of interest" description="Disordered" evidence="2">
    <location>
        <begin position="1"/>
        <end position="21"/>
    </location>
</feature>
<feature type="compositionally biased region" description="Basic and acidic residues" evidence="2">
    <location>
        <begin position="1"/>
        <end position="11"/>
    </location>
</feature>
<feature type="binding site" evidence="1">
    <location>
        <begin position="658"/>
        <end position="665"/>
    </location>
    <ligand>
        <name>ATP</name>
        <dbReference type="ChEBI" id="CHEBI:30616"/>
    </ligand>
</feature>
<protein>
    <recommendedName>
        <fullName evidence="1">DNA mismatch repair protein MutS</fullName>
    </recommendedName>
</protein>
<comment type="function">
    <text evidence="1">This protein is involved in the repair of mismatches in DNA. It is possible that it carries out the mismatch recognition step. This protein has a weak ATPase activity.</text>
</comment>
<comment type="similarity">
    <text evidence="1">Belongs to the DNA mismatch repair MutS family.</text>
</comment>
<comment type="sequence caution" evidence="3">
    <conflict type="erroneous initiation">
        <sequence resource="EMBL-CDS" id="AAL52982"/>
    </conflict>
</comment>
<organism>
    <name type="scientific">Brucella melitensis biotype 1 (strain ATCC 23456 / CCUG 17765 / NCTC 10094 / 16M)</name>
    <dbReference type="NCBI Taxonomy" id="224914"/>
    <lineage>
        <taxon>Bacteria</taxon>
        <taxon>Pseudomonadati</taxon>
        <taxon>Pseudomonadota</taxon>
        <taxon>Alphaproteobacteria</taxon>
        <taxon>Hyphomicrobiales</taxon>
        <taxon>Brucellaceae</taxon>
        <taxon>Brucella/Ochrobactrum group</taxon>
        <taxon>Brucella</taxon>
    </lineage>
</organism>
<keyword id="KW-0067">ATP-binding</keyword>
<keyword id="KW-0227">DNA damage</keyword>
<keyword id="KW-0234">DNA repair</keyword>
<keyword id="KW-0238">DNA-binding</keyword>
<keyword id="KW-0547">Nucleotide-binding</keyword>
<dbReference type="EMBL" id="AE008917">
    <property type="protein sequence ID" value="AAL52982.1"/>
    <property type="status" value="ALT_INIT"/>
    <property type="molecule type" value="Genomic_DNA"/>
</dbReference>
<dbReference type="PIR" id="AC3477">
    <property type="entry name" value="AC3477"/>
</dbReference>
<dbReference type="RefSeq" id="WP_004684675.1">
    <property type="nucleotide sequence ID" value="NZ_GG703778.1"/>
</dbReference>
<dbReference type="SMR" id="Q8YES6"/>
<dbReference type="GeneID" id="97534441"/>
<dbReference type="KEGG" id="bme:BMEI1801"/>
<dbReference type="KEGG" id="bmel:DK63_1686"/>
<dbReference type="PATRIC" id="fig|224914.52.peg.1781"/>
<dbReference type="eggNOG" id="COG0249">
    <property type="taxonomic scope" value="Bacteria"/>
</dbReference>
<dbReference type="PhylomeDB" id="Q8YES6"/>
<dbReference type="Proteomes" id="UP000000419">
    <property type="component" value="Chromosome I"/>
</dbReference>
<dbReference type="GO" id="GO:0005829">
    <property type="term" value="C:cytosol"/>
    <property type="evidence" value="ECO:0007669"/>
    <property type="project" value="TreeGrafter"/>
</dbReference>
<dbReference type="GO" id="GO:0005524">
    <property type="term" value="F:ATP binding"/>
    <property type="evidence" value="ECO:0007669"/>
    <property type="project" value="UniProtKB-UniRule"/>
</dbReference>
<dbReference type="GO" id="GO:0140664">
    <property type="term" value="F:ATP-dependent DNA damage sensor activity"/>
    <property type="evidence" value="ECO:0007669"/>
    <property type="project" value="InterPro"/>
</dbReference>
<dbReference type="GO" id="GO:0003684">
    <property type="term" value="F:damaged DNA binding"/>
    <property type="evidence" value="ECO:0007669"/>
    <property type="project" value="UniProtKB-UniRule"/>
</dbReference>
<dbReference type="GO" id="GO:0030983">
    <property type="term" value="F:mismatched DNA binding"/>
    <property type="evidence" value="ECO:0007669"/>
    <property type="project" value="InterPro"/>
</dbReference>
<dbReference type="GO" id="GO:0006298">
    <property type="term" value="P:mismatch repair"/>
    <property type="evidence" value="ECO:0007669"/>
    <property type="project" value="UniProtKB-UniRule"/>
</dbReference>
<dbReference type="CDD" id="cd03284">
    <property type="entry name" value="ABC_MutS1"/>
    <property type="match status" value="1"/>
</dbReference>
<dbReference type="FunFam" id="3.40.1170.10:FF:000001">
    <property type="entry name" value="DNA mismatch repair protein MutS"/>
    <property type="match status" value="1"/>
</dbReference>
<dbReference type="FunFam" id="3.40.50.300:FF:000870">
    <property type="entry name" value="MutS protein homolog 4"/>
    <property type="match status" value="1"/>
</dbReference>
<dbReference type="Gene3D" id="1.10.1420.10">
    <property type="match status" value="2"/>
</dbReference>
<dbReference type="Gene3D" id="6.10.140.430">
    <property type="match status" value="1"/>
</dbReference>
<dbReference type="Gene3D" id="3.40.1170.10">
    <property type="entry name" value="DNA repair protein MutS, domain I"/>
    <property type="match status" value="1"/>
</dbReference>
<dbReference type="Gene3D" id="3.30.420.110">
    <property type="entry name" value="MutS, connector domain"/>
    <property type="match status" value="1"/>
</dbReference>
<dbReference type="Gene3D" id="3.40.50.300">
    <property type="entry name" value="P-loop containing nucleotide triphosphate hydrolases"/>
    <property type="match status" value="1"/>
</dbReference>
<dbReference type="HAMAP" id="MF_00096">
    <property type="entry name" value="MutS"/>
    <property type="match status" value="1"/>
</dbReference>
<dbReference type="InterPro" id="IPR005748">
    <property type="entry name" value="DNA_mismatch_repair_MutS"/>
</dbReference>
<dbReference type="InterPro" id="IPR007695">
    <property type="entry name" value="DNA_mismatch_repair_MutS-lik_N"/>
</dbReference>
<dbReference type="InterPro" id="IPR017261">
    <property type="entry name" value="DNA_mismatch_repair_MutS/MSH"/>
</dbReference>
<dbReference type="InterPro" id="IPR000432">
    <property type="entry name" value="DNA_mismatch_repair_MutS_C"/>
</dbReference>
<dbReference type="InterPro" id="IPR007861">
    <property type="entry name" value="DNA_mismatch_repair_MutS_clamp"/>
</dbReference>
<dbReference type="InterPro" id="IPR007696">
    <property type="entry name" value="DNA_mismatch_repair_MutS_core"/>
</dbReference>
<dbReference type="InterPro" id="IPR016151">
    <property type="entry name" value="DNA_mismatch_repair_MutS_N"/>
</dbReference>
<dbReference type="InterPro" id="IPR036187">
    <property type="entry name" value="DNA_mismatch_repair_MutS_sf"/>
</dbReference>
<dbReference type="InterPro" id="IPR007860">
    <property type="entry name" value="DNA_mmatch_repair_MutS_con_dom"/>
</dbReference>
<dbReference type="InterPro" id="IPR045076">
    <property type="entry name" value="MutS"/>
</dbReference>
<dbReference type="InterPro" id="IPR036678">
    <property type="entry name" value="MutS_con_dom_sf"/>
</dbReference>
<dbReference type="InterPro" id="IPR027417">
    <property type="entry name" value="P-loop_NTPase"/>
</dbReference>
<dbReference type="NCBIfam" id="TIGR01070">
    <property type="entry name" value="mutS1"/>
    <property type="match status" value="1"/>
</dbReference>
<dbReference type="NCBIfam" id="NF003810">
    <property type="entry name" value="PRK05399.1"/>
    <property type="match status" value="1"/>
</dbReference>
<dbReference type="PANTHER" id="PTHR11361:SF34">
    <property type="entry name" value="DNA MISMATCH REPAIR PROTEIN MSH1, MITOCHONDRIAL"/>
    <property type="match status" value="1"/>
</dbReference>
<dbReference type="PANTHER" id="PTHR11361">
    <property type="entry name" value="DNA MISMATCH REPAIR PROTEIN MUTS FAMILY MEMBER"/>
    <property type="match status" value="1"/>
</dbReference>
<dbReference type="Pfam" id="PF01624">
    <property type="entry name" value="MutS_I"/>
    <property type="match status" value="1"/>
</dbReference>
<dbReference type="Pfam" id="PF05188">
    <property type="entry name" value="MutS_II"/>
    <property type="match status" value="1"/>
</dbReference>
<dbReference type="Pfam" id="PF05192">
    <property type="entry name" value="MutS_III"/>
    <property type="match status" value="1"/>
</dbReference>
<dbReference type="Pfam" id="PF05190">
    <property type="entry name" value="MutS_IV"/>
    <property type="match status" value="1"/>
</dbReference>
<dbReference type="Pfam" id="PF00488">
    <property type="entry name" value="MutS_V"/>
    <property type="match status" value="1"/>
</dbReference>
<dbReference type="PIRSF" id="PIRSF037677">
    <property type="entry name" value="DNA_mis_repair_Msh6"/>
    <property type="match status" value="1"/>
</dbReference>
<dbReference type="SMART" id="SM00534">
    <property type="entry name" value="MUTSac"/>
    <property type="match status" value="1"/>
</dbReference>
<dbReference type="SMART" id="SM00533">
    <property type="entry name" value="MUTSd"/>
    <property type="match status" value="1"/>
</dbReference>
<dbReference type="SUPFAM" id="SSF55271">
    <property type="entry name" value="DNA repair protein MutS, domain I"/>
    <property type="match status" value="1"/>
</dbReference>
<dbReference type="SUPFAM" id="SSF53150">
    <property type="entry name" value="DNA repair protein MutS, domain II"/>
    <property type="match status" value="1"/>
</dbReference>
<dbReference type="SUPFAM" id="SSF48334">
    <property type="entry name" value="DNA repair protein MutS, domain III"/>
    <property type="match status" value="1"/>
</dbReference>
<dbReference type="SUPFAM" id="SSF52540">
    <property type="entry name" value="P-loop containing nucleoside triphosphate hydrolases"/>
    <property type="match status" value="1"/>
</dbReference>
<dbReference type="PROSITE" id="PS00486">
    <property type="entry name" value="DNA_MISMATCH_REPAIR_2"/>
    <property type="match status" value="1"/>
</dbReference>
<sequence length="910" mass="98808">MEAKVEEKEPEPVENAGPDAPVRLTPMMEQYIEIKAANVDSLLFYRMGDFYELFFDDAVAASAALGITLTKRGKHLGEDIPMCGVPVHAADDYLQKLIAKGYRVAVCEQVEDPAEAKKRGSKSVVKRDVIRLVTPGTLTEEKLLDPAQANFLMAMGRTRGDGALALAWIDISTGTFRVAETTPDRLFADIMRVDPRELVVADSAFHDEELRPVFDLIGKAVTPQPATLFDSAAAQTRIQHYFNVATLDGFGQFSRPELSAISGAIAYIEKTQISERPPLMRPEREHEGGTLFIDPATRASLELARTMSGNRDGSLLKAIDRTVTGGGARLLAERLTAPLTSPKEIALRLDSVSWCLSEQTLCEALRLELKGVPDMPRALSRLAVGRGGPRDLGALACGFEAAGGIASLLDGALLPDELAAAREAIEKMPAGFAAHLDRALADELPLLKRDGGFVREGYNSELDEMRALRDQSRRVIAGLQADYIEETGIKSLKIKHNNVLGYFIEVTANNSGAMTDTDEAKSRFIHRQTMANAMRFTTTELAELESKIANAADRALSIELAIFEELTAEAVAHADSIRAAASALSVFDVSTALAVLAEEQGYCRPHVDDSLSFNIVAGRHPVVEQALRRQAANPFVANDCDLSPQRDGGDGAIWLLTGPNMGGKSTFLRQNALIAILAQMGSFVPAGSAHIGVVDRLFSRVGASDDLARGRSTFMVEMVETAAILNQAGEHSLVILDEIGRGTATFDGLSIAWAAVEYLHEKNRCRALFATHFHEMTALSEKLERLSNVTMRVKEWDNDVIFLHEVAKGAADRSYGVQVARLAGLPEAVVNRARDVLHQLEAGETSGKADRLIDDLPLFSVMLQQEKPKPQIQAKDSELANAVAAISPDELTPREALDLIYKLKELAGKA</sequence>
<reference key="1">
    <citation type="journal article" date="2002" name="Proc. Natl. Acad. Sci. U.S.A.">
        <title>The genome sequence of the facultative intracellular pathogen Brucella melitensis.</title>
        <authorList>
            <person name="DelVecchio V.G."/>
            <person name="Kapatral V."/>
            <person name="Redkar R.J."/>
            <person name="Patra G."/>
            <person name="Mujer C."/>
            <person name="Los T."/>
            <person name="Ivanova N."/>
            <person name="Anderson I."/>
            <person name="Bhattacharyya A."/>
            <person name="Lykidis A."/>
            <person name="Reznik G."/>
            <person name="Jablonski L."/>
            <person name="Larsen N."/>
            <person name="D'Souza M."/>
            <person name="Bernal A."/>
            <person name="Mazur M."/>
            <person name="Goltsman E."/>
            <person name="Selkov E."/>
            <person name="Elzer P.H."/>
            <person name="Hagius S."/>
            <person name="O'Callaghan D."/>
            <person name="Letesson J.-J."/>
            <person name="Haselkorn R."/>
            <person name="Kyrpides N.C."/>
            <person name="Overbeek R."/>
        </authorList>
    </citation>
    <scope>NUCLEOTIDE SEQUENCE [LARGE SCALE GENOMIC DNA]</scope>
    <source>
        <strain>ATCC 23456 / CCUG 17765 / NCTC 10094 / 16M</strain>
    </source>
</reference>